<evidence type="ECO:0000250" key="1">
    <source>
        <dbReference type="UniProtKB" id="P42945"/>
    </source>
</evidence>
<evidence type="ECO:0000255" key="2"/>
<evidence type="ECO:0000305" key="3"/>
<sequence length="1857" mass="210524">MSSLSQQLKSINEKTASVALDRKSRSKIHSKSLIFDPKIASTQDYDYLYQIGLEGLEDLIEIDSRFSKFKQTLFSETTINLDRNVQTQDTLDQLNKNVEVFLSLVSPYYLLTPSTKAVEWLIRRFYINIHNGEMLLLTSLPFYNSPVFVKILNVIPKNQFPKIFEWVVGYKDLLKSPTSSSILKSFHNDAKFFELYSKYLMDQLNNHAVFKEQLVFYLANTVQLVASFTHNLGQFGETYLPVILEVVGKLLLAGSKFSSTLRNDIMLTAYSIISVLSSLVPLSADLVKSFTESILQDPTACDSNTRKQTVIVLGQLWNFYNEDNFEVDCFKNLPASKLVQDDLLKNLIEEGYKINKLLVVYFASNLPQIDAFKIFDFINVDKSETFFKIVTSKLLYYAYNNQDEAIRAKLIEAFESLLRTNKELFVKVLQNYKDGLDISQLEMQLMTTLGDSNIENIHDADIELEDEEEEEEEDQAVLDVDFSDVCNSLENYKTSTTSFLNKSSDEEFTKLFQAFAEKSRSFNIKSQKLILAKFSKAIFVSPEASISFMLRVSFTPSVPLSIRLLVLRFIKLRLKELSLSEDKIDTYLLAPILLLGLYDTNKSVRAGFAELLRVVKDTTSKFHGNKKKVKTSLFMEDQIYGNTEPSKRAIVPPQDGLEMLNVLIEDSKSILDDTVIDKSRLNYVLFQVLFKSQKSGQKKFGQLLLKTFILNQWTLPFWPIVFKYKVWNIISIENNSNGGNDDRFFFIDTDLTDYFSNRDDLIEQAKASKIDFENDVEKAIVGLVGGTSSNDKNVNKEADWLLKALEAPNKLQVAAGKRLSSVFTSFTSIDMRAKLVNKLIELLINDGDDSDNLVVDPVEVLQLLDMDHETIISVLRNVQIVSQIPEQGIVKRRRRSSNSTKQAMARDDISSIAATHLKKLTIVLDLLEFNLRKKTSDIAKPDLLQNLFRILTDLDYLGNDGNLPILYAQETLASCMLLSIVQMKDNSKSNSFKFDSNVVRADLIVNSIRLSQSPQVQNRLLLVIAELAALAPEIILHSVMPIFTFMGAHTVRQDDEFSSSALQQTIAKVIPALAANGSSSLSYEIEFLLTSFVAAFQHIPRHRRVKLFTSLTKTLSYKHSLHIILFLMGQQYSNNITRNKAHESISILEFTSAFLKNFSAQEQLEGVEKFYQLWNQIPNAQLEPNSDEFNALSSRSIFGVSILSLSKSGLLTFKSQLLNFIDKVLDSDTQNDFSNLPSLKLKIALILLDPKKPAEDKSDLLNYFRKVTSFILSSLDTFTNVSRNDVLLDNLYALLGNFLDLLPLNYFIDSIIDSLDCDQISNTLEIKIAKNFAILASRKIENELNANNIDDVIEESILQKLLPVLNKGIKKNLDIELQQAYLNAFSSIVNKFGGSTHLLVTQGNTEALINSLNIITSNSGLLSEQPEIVISSINAITSIVNVLGVKAIGLFPKIVPPSLNIWKTTTASEDESSKLLQASIILLLACLIKKIPVFMTTSLDSIFITILTSDSVDNTVRSSVLQLIVEHMELSQVLKSLCNIWNNKKFYQNDNAGNLGLYLNVLQSTIERMDKKSASSQSTLFMKWLIQAFEFRHYAFDENNKFDNNTIHRLESSFHSCGASYVMKLNDKSFRPLFANLVRWAVSGEGSNATGNTELSRLLAFFKFFSKLQDKLKSIITSYFSYLIDPVSSILNRFANGDIVDINLRRILLNSLTSSFKYDQDDYWSQQSRFDSICSPLLNQLSNIEPNIGKYLVKCVSSFISNVSSEEYNEKLVHGLIEFISNENESTTSNTKIWTIRTLKTIFQKMGEQWLSYLPTLIPYIAELLEDDDEEVELEVRNGLVRVIENVLGEPLDRYLD</sequence>
<protein>
    <recommendedName>
        <fullName>U3 small nucleolar RNA-associated protein 10</fullName>
    </recommendedName>
</protein>
<proteinExistence type="inferred from homology"/>
<dbReference type="EMBL" id="CR382134">
    <property type="protein sequence ID" value="CAG84998.2"/>
    <property type="molecule type" value="Genomic_DNA"/>
</dbReference>
<dbReference type="RefSeq" id="XP_457013.2">
    <property type="nucleotide sequence ID" value="XM_457013.1"/>
</dbReference>
<dbReference type="SMR" id="Q6BXQ6"/>
<dbReference type="FunCoup" id="Q6BXQ6">
    <property type="interactions" value="1201"/>
</dbReference>
<dbReference type="STRING" id="284592.Q6BXQ6"/>
<dbReference type="GeneID" id="2913152"/>
<dbReference type="KEGG" id="dha:DEHA2B01100g"/>
<dbReference type="VEuPathDB" id="FungiDB:DEHA2B01100g"/>
<dbReference type="eggNOG" id="KOG1837">
    <property type="taxonomic scope" value="Eukaryota"/>
</dbReference>
<dbReference type="HOGENOM" id="CLU_001128_3_1_1"/>
<dbReference type="InParanoid" id="Q6BXQ6"/>
<dbReference type="OMA" id="GEPFDRY"/>
<dbReference type="OrthoDB" id="31183at2759"/>
<dbReference type="Proteomes" id="UP000000599">
    <property type="component" value="Chromosome B"/>
</dbReference>
<dbReference type="GO" id="GO:0030686">
    <property type="term" value="C:90S preribosome"/>
    <property type="evidence" value="ECO:0007669"/>
    <property type="project" value="EnsemblFungi"/>
</dbReference>
<dbReference type="GO" id="GO:0016020">
    <property type="term" value="C:membrane"/>
    <property type="evidence" value="ECO:0007669"/>
    <property type="project" value="UniProtKB-SubCell"/>
</dbReference>
<dbReference type="GO" id="GO:0030688">
    <property type="term" value="C:preribosome, small subunit precursor"/>
    <property type="evidence" value="ECO:0007669"/>
    <property type="project" value="EnsemblFungi"/>
</dbReference>
<dbReference type="GO" id="GO:0033553">
    <property type="term" value="C:rDNA heterochromatin"/>
    <property type="evidence" value="ECO:0007669"/>
    <property type="project" value="EnsemblFungi"/>
</dbReference>
<dbReference type="GO" id="GO:0032040">
    <property type="term" value="C:small-subunit processome"/>
    <property type="evidence" value="ECO:0007669"/>
    <property type="project" value="EnsemblFungi"/>
</dbReference>
<dbReference type="GO" id="GO:0034455">
    <property type="term" value="C:t-UTP complex"/>
    <property type="evidence" value="ECO:0007669"/>
    <property type="project" value="EnsemblFungi"/>
</dbReference>
<dbReference type="GO" id="GO:0034511">
    <property type="term" value="F:U3 snoRNA binding"/>
    <property type="evidence" value="ECO:0007669"/>
    <property type="project" value="EnsemblFungi"/>
</dbReference>
<dbReference type="GO" id="GO:0000480">
    <property type="term" value="P:endonucleolytic cleavage in 5'-ETS of tricistronic rRNA transcript (SSU-rRNA, 5.8S rRNA, LSU-rRNA)"/>
    <property type="evidence" value="ECO:0007669"/>
    <property type="project" value="EnsemblFungi"/>
</dbReference>
<dbReference type="GO" id="GO:0000447">
    <property type="term" value="P:endonucleolytic cleavage in ITS1 to separate SSU-rRNA from 5.8S rRNA and LSU-rRNA from tricistronic rRNA transcript (SSU-rRNA, 5.8S rRNA, LSU-rRNA)"/>
    <property type="evidence" value="ECO:0007669"/>
    <property type="project" value="EnsemblFungi"/>
</dbReference>
<dbReference type="GO" id="GO:0000472">
    <property type="term" value="P:endonucleolytic cleavage to generate mature 5'-end of SSU-rRNA from (SSU-rRNA, 5.8S rRNA, LSU-rRNA)"/>
    <property type="evidence" value="ECO:0007669"/>
    <property type="project" value="EnsemblFungi"/>
</dbReference>
<dbReference type="GO" id="GO:0045943">
    <property type="term" value="P:positive regulation of transcription by RNA polymerase I"/>
    <property type="evidence" value="ECO:0007669"/>
    <property type="project" value="EnsemblFungi"/>
</dbReference>
<dbReference type="FunFam" id="1.25.10.10:FF:000530">
    <property type="entry name" value="UTP10p Nucleolar protein"/>
    <property type="match status" value="1"/>
</dbReference>
<dbReference type="Gene3D" id="1.25.10.10">
    <property type="entry name" value="Leucine-rich Repeat Variant"/>
    <property type="match status" value="2"/>
</dbReference>
<dbReference type="InterPro" id="IPR011989">
    <property type="entry name" value="ARM-like"/>
</dbReference>
<dbReference type="InterPro" id="IPR016024">
    <property type="entry name" value="ARM-type_fold"/>
</dbReference>
<dbReference type="InterPro" id="IPR012954">
    <property type="entry name" value="BP28_C_dom"/>
</dbReference>
<dbReference type="InterPro" id="IPR021133">
    <property type="entry name" value="HEAT_type_2"/>
</dbReference>
<dbReference type="InterPro" id="IPR056473">
    <property type="entry name" value="HEAT_Utp10/HEAT1"/>
</dbReference>
<dbReference type="InterPro" id="IPR022125">
    <property type="entry name" value="U3snoRNP10_N"/>
</dbReference>
<dbReference type="InterPro" id="IPR040191">
    <property type="entry name" value="UTP10"/>
</dbReference>
<dbReference type="PANTHER" id="PTHR13457">
    <property type="entry name" value="BAP28"/>
    <property type="match status" value="1"/>
</dbReference>
<dbReference type="PANTHER" id="PTHR13457:SF1">
    <property type="entry name" value="HEAT REPEAT-CONTAINING PROTEIN 1"/>
    <property type="match status" value="1"/>
</dbReference>
<dbReference type="Pfam" id="PF08146">
    <property type="entry name" value="BP28CT"/>
    <property type="match status" value="1"/>
</dbReference>
<dbReference type="Pfam" id="PF23243">
    <property type="entry name" value="HEAT_HEATR1"/>
    <property type="match status" value="1"/>
</dbReference>
<dbReference type="Pfam" id="PF12397">
    <property type="entry name" value="U3snoRNP10"/>
    <property type="match status" value="1"/>
</dbReference>
<dbReference type="SMART" id="SM01036">
    <property type="entry name" value="BP28CT"/>
    <property type="match status" value="1"/>
</dbReference>
<dbReference type="SUPFAM" id="SSF48371">
    <property type="entry name" value="ARM repeat"/>
    <property type="match status" value="2"/>
</dbReference>
<dbReference type="PROSITE" id="PS50077">
    <property type="entry name" value="HEAT_REPEAT"/>
    <property type="match status" value="1"/>
</dbReference>
<accession>Q6BXQ6</accession>
<organism>
    <name type="scientific">Debaryomyces hansenii (strain ATCC 36239 / CBS 767 / BCRC 21394 / JCM 1990 / NBRC 0083 / IGC 2968)</name>
    <name type="common">Yeast</name>
    <name type="synonym">Torulaspora hansenii</name>
    <dbReference type="NCBI Taxonomy" id="284592"/>
    <lineage>
        <taxon>Eukaryota</taxon>
        <taxon>Fungi</taxon>
        <taxon>Dikarya</taxon>
        <taxon>Ascomycota</taxon>
        <taxon>Saccharomycotina</taxon>
        <taxon>Pichiomycetes</taxon>
        <taxon>Debaryomycetaceae</taxon>
        <taxon>Debaryomyces</taxon>
    </lineage>
</organism>
<name>UTP10_DEBHA</name>
<reference key="1">
    <citation type="journal article" date="2004" name="Nature">
        <title>Genome evolution in yeasts.</title>
        <authorList>
            <person name="Dujon B."/>
            <person name="Sherman D."/>
            <person name="Fischer G."/>
            <person name="Durrens P."/>
            <person name="Casaregola S."/>
            <person name="Lafontaine I."/>
            <person name="de Montigny J."/>
            <person name="Marck C."/>
            <person name="Neuveglise C."/>
            <person name="Talla E."/>
            <person name="Goffard N."/>
            <person name="Frangeul L."/>
            <person name="Aigle M."/>
            <person name="Anthouard V."/>
            <person name="Babour A."/>
            <person name="Barbe V."/>
            <person name="Barnay S."/>
            <person name="Blanchin S."/>
            <person name="Beckerich J.-M."/>
            <person name="Beyne E."/>
            <person name="Bleykasten C."/>
            <person name="Boisrame A."/>
            <person name="Boyer J."/>
            <person name="Cattolico L."/>
            <person name="Confanioleri F."/>
            <person name="de Daruvar A."/>
            <person name="Despons L."/>
            <person name="Fabre E."/>
            <person name="Fairhead C."/>
            <person name="Ferry-Dumazet H."/>
            <person name="Groppi A."/>
            <person name="Hantraye F."/>
            <person name="Hennequin C."/>
            <person name="Jauniaux N."/>
            <person name="Joyet P."/>
            <person name="Kachouri R."/>
            <person name="Kerrest A."/>
            <person name="Koszul R."/>
            <person name="Lemaire M."/>
            <person name="Lesur I."/>
            <person name="Ma L."/>
            <person name="Muller H."/>
            <person name="Nicaud J.-M."/>
            <person name="Nikolski M."/>
            <person name="Oztas S."/>
            <person name="Ozier-Kalogeropoulos O."/>
            <person name="Pellenz S."/>
            <person name="Potier S."/>
            <person name="Richard G.-F."/>
            <person name="Straub M.-L."/>
            <person name="Suleau A."/>
            <person name="Swennen D."/>
            <person name="Tekaia F."/>
            <person name="Wesolowski-Louvel M."/>
            <person name="Westhof E."/>
            <person name="Wirth B."/>
            <person name="Zeniou-Meyer M."/>
            <person name="Zivanovic Y."/>
            <person name="Bolotin-Fukuhara M."/>
            <person name="Thierry A."/>
            <person name="Bouchier C."/>
            <person name="Caudron B."/>
            <person name="Scarpelli C."/>
            <person name="Gaillardin C."/>
            <person name="Weissenbach J."/>
            <person name="Wincker P."/>
            <person name="Souciet J.-L."/>
        </authorList>
    </citation>
    <scope>NUCLEOTIDE SEQUENCE [LARGE SCALE GENOMIC DNA]</scope>
    <source>
        <strain>ATCC 36239 / CBS 767 / BCRC 21394 / JCM 1990 / NBRC 0083 / IGC 2968</strain>
    </source>
</reference>
<comment type="function">
    <text evidence="1">Involved in nucleolar processing of pre-18S ribosomal RNA. Involved in ribosome biosynthesis (By similarity).</text>
</comment>
<comment type="subunit">
    <text evidence="1">Component of the ribosomal small subunit (SSU) processome.</text>
</comment>
<comment type="subcellular location">
    <subcellularLocation>
        <location evidence="1 2">Nucleus</location>
        <location evidence="1 2">Nucleolus</location>
    </subcellularLocation>
    <subcellularLocation>
        <location evidence="2">Membrane</location>
        <topology evidence="2">Single-pass membrane protein</topology>
    </subcellularLocation>
</comment>
<comment type="similarity">
    <text evidence="3">Belongs to the HEATR1/UTP10 family.</text>
</comment>
<keyword id="KW-0472">Membrane</keyword>
<keyword id="KW-0539">Nucleus</keyword>
<keyword id="KW-1185">Reference proteome</keyword>
<keyword id="KW-0677">Repeat</keyword>
<keyword id="KW-0687">Ribonucleoprotein</keyword>
<keyword id="KW-0690">Ribosome biogenesis</keyword>
<keyword id="KW-0698">rRNA processing</keyword>
<keyword id="KW-0812">Transmembrane</keyword>
<keyword id="KW-1133">Transmembrane helix</keyword>
<feature type="chain" id="PRO_0000308503" description="U3 small nucleolar RNA-associated protein 10">
    <location>
        <begin position="1"/>
        <end position="1857"/>
    </location>
</feature>
<feature type="transmembrane region" description="Helical" evidence="2">
    <location>
        <begin position="267"/>
        <end position="287"/>
    </location>
</feature>
<feature type="repeat" description="HEAT" evidence="2">
    <location>
        <begin position="1817"/>
        <end position="1855"/>
    </location>
</feature>
<gene>
    <name evidence="1" type="primary">UTP10</name>
    <name type="ordered locus">DEHA2B01100g</name>
</gene>